<evidence type="ECO:0000255" key="1">
    <source>
        <dbReference type="HAMAP-Rule" id="MF_01451"/>
    </source>
</evidence>
<proteinExistence type="inferred from homology"/>
<accession>Q8NXE9</accession>
<keyword id="KW-0067">ATP-binding</keyword>
<keyword id="KW-0227">DNA damage</keyword>
<keyword id="KW-0234">DNA repair</keyword>
<keyword id="KW-0238">DNA-binding</keyword>
<keyword id="KW-0269">Exonuclease</keyword>
<keyword id="KW-0347">Helicase</keyword>
<keyword id="KW-0378">Hydrolase</keyword>
<keyword id="KW-0413">Isomerase</keyword>
<keyword id="KW-0540">Nuclease</keyword>
<keyword id="KW-0547">Nucleotide-binding</keyword>
<dbReference type="EC" id="3.1.-.-" evidence="1"/>
<dbReference type="EC" id="5.6.2.4" evidence="1"/>
<dbReference type="EMBL" id="BA000033">
    <property type="protein sequence ID" value="BAB94714.1"/>
    <property type="molecule type" value="Genomic_DNA"/>
</dbReference>
<dbReference type="RefSeq" id="WP_000154928.1">
    <property type="nucleotide sequence ID" value="NC_003923.1"/>
</dbReference>
<dbReference type="SMR" id="Q8NXE9"/>
<dbReference type="KEGG" id="sam:MW0849"/>
<dbReference type="HOGENOM" id="CLU_001114_3_1_9"/>
<dbReference type="GO" id="GO:0005829">
    <property type="term" value="C:cytosol"/>
    <property type="evidence" value="ECO:0007669"/>
    <property type="project" value="TreeGrafter"/>
</dbReference>
<dbReference type="GO" id="GO:0033202">
    <property type="term" value="C:DNA helicase complex"/>
    <property type="evidence" value="ECO:0007669"/>
    <property type="project" value="TreeGrafter"/>
</dbReference>
<dbReference type="GO" id="GO:0043138">
    <property type="term" value="F:3'-5' DNA helicase activity"/>
    <property type="evidence" value="ECO:0007669"/>
    <property type="project" value="UniProtKB-UniRule"/>
</dbReference>
<dbReference type="GO" id="GO:0008408">
    <property type="term" value="F:3'-5' exonuclease activity"/>
    <property type="evidence" value="ECO:0007669"/>
    <property type="project" value="UniProtKB-UniRule"/>
</dbReference>
<dbReference type="GO" id="GO:0005524">
    <property type="term" value="F:ATP binding"/>
    <property type="evidence" value="ECO:0007669"/>
    <property type="project" value="UniProtKB-UniRule"/>
</dbReference>
<dbReference type="GO" id="GO:0016887">
    <property type="term" value="F:ATP hydrolysis activity"/>
    <property type="evidence" value="ECO:0007669"/>
    <property type="project" value="RHEA"/>
</dbReference>
<dbReference type="GO" id="GO:0003690">
    <property type="term" value="F:double-stranded DNA binding"/>
    <property type="evidence" value="ECO:0007669"/>
    <property type="project" value="UniProtKB-UniRule"/>
</dbReference>
<dbReference type="GO" id="GO:0000724">
    <property type="term" value="P:double-strand break repair via homologous recombination"/>
    <property type="evidence" value="ECO:0007669"/>
    <property type="project" value="UniProtKB-UniRule"/>
</dbReference>
<dbReference type="CDD" id="cd17932">
    <property type="entry name" value="DEXQc_UvrD"/>
    <property type="match status" value="2"/>
</dbReference>
<dbReference type="FunFam" id="3.40.50.300:FF:001196">
    <property type="entry name" value="ATP-dependent helicase/nuclease subunit A"/>
    <property type="match status" value="1"/>
</dbReference>
<dbReference type="FunFam" id="3.40.50.300:FF:001715">
    <property type="entry name" value="ATP-dependent helicase/nuclease subunit A"/>
    <property type="match status" value="1"/>
</dbReference>
<dbReference type="Gene3D" id="3.90.320.10">
    <property type="match status" value="1"/>
</dbReference>
<dbReference type="Gene3D" id="3.40.50.300">
    <property type="entry name" value="P-loop containing nucleotide triphosphate hydrolases"/>
    <property type="match status" value="4"/>
</dbReference>
<dbReference type="Gene3D" id="1.10.486.10">
    <property type="entry name" value="PCRA, domain 4"/>
    <property type="match status" value="1"/>
</dbReference>
<dbReference type="HAMAP" id="MF_01451">
    <property type="entry name" value="AddA"/>
    <property type="match status" value="1"/>
</dbReference>
<dbReference type="InterPro" id="IPR014152">
    <property type="entry name" value="AddA"/>
</dbReference>
<dbReference type="InterPro" id="IPR014017">
    <property type="entry name" value="DNA_helicase_UvrD-like_C"/>
</dbReference>
<dbReference type="InterPro" id="IPR000212">
    <property type="entry name" value="DNA_helicase_UvrD/REP"/>
</dbReference>
<dbReference type="InterPro" id="IPR027417">
    <property type="entry name" value="P-loop_NTPase"/>
</dbReference>
<dbReference type="InterPro" id="IPR011604">
    <property type="entry name" value="PDDEXK-like_dom_sf"/>
</dbReference>
<dbReference type="InterPro" id="IPR038726">
    <property type="entry name" value="PDDEXK_AddAB-type"/>
</dbReference>
<dbReference type="InterPro" id="IPR011335">
    <property type="entry name" value="Restrct_endonuc-II-like"/>
</dbReference>
<dbReference type="InterPro" id="IPR014016">
    <property type="entry name" value="UvrD-like_ATP-bd"/>
</dbReference>
<dbReference type="NCBIfam" id="TIGR02785">
    <property type="entry name" value="addA_Gpos"/>
    <property type="match status" value="1"/>
</dbReference>
<dbReference type="PANTHER" id="PTHR11070:SF48">
    <property type="entry name" value="ATP-DEPENDENT HELICASE_NUCLEASE SUBUNIT A"/>
    <property type="match status" value="1"/>
</dbReference>
<dbReference type="PANTHER" id="PTHR11070">
    <property type="entry name" value="UVRD / RECB / PCRA DNA HELICASE FAMILY MEMBER"/>
    <property type="match status" value="1"/>
</dbReference>
<dbReference type="Pfam" id="PF12705">
    <property type="entry name" value="PDDEXK_1"/>
    <property type="match status" value="1"/>
</dbReference>
<dbReference type="Pfam" id="PF00580">
    <property type="entry name" value="UvrD-helicase"/>
    <property type="match status" value="1"/>
</dbReference>
<dbReference type="Pfam" id="PF13361">
    <property type="entry name" value="UvrD_C"/>
    <property type="match status" value="1"/>
</dbReference>
<dbReference type="SUPFAM" id="SSF52540">
    <property type="entry name" value="P-loop containing nucleoside triphosphate hydrolases"/>
    <property type="match status" value="1"/>
</dbReference>
<dbReference type="SUPFAM" id="SSF52980">
    <property type="entry name" value="Restriction endonuclease-like"/>
    <property type="match status" value="1"/>
</dbReference>
<dbReference type="PROSITE" id="PS51198">
    <property type="entry name" value="UVRD_HELICASE_ATP_BIND"/>
    <property type="match status" value="1"/>
</dbReference>
<dbReference type="PROSITE" id="PS51217">
    <property type="entry name" value="UVRD_HELICASE_CTER"/>
    <property type="match status" value="1"/>
</dbReference>
<sequence>MTIPEKPQGVIWTDAQWQSIYATGQDVLVAAAAGSGKTAVLVERIIQKILRDGIDVDRLLVVTFTNLSAREMKHRVDQRIQEASIADPANAHLKNQRIKIHQAQISTLHSFCLKLIQQHYDVLNIDPNFRTSSEAENILLLEQTIDEVIEQHYDILDPAFIELTEQLSSDRSDDQFRMIIKQLYFFSVANPNPTNWLDQLVTPYEEEAQQAQLIQLLTDLSKVFITAAYDALNKAYDLFSMMDSVDKHLAVIEDERRLMGRVLEGGFIDIPYLTGHEFGARLPNVTAKIKEANEMMVDALEDAKLQYKKYKSLIDKVKSDYFSREADDLKADMQQLAPRVKYLARIVKDVMSEFNRKKRSKNILDFSDYEHFALQILTNEDGSPSEIAESYRQHFQEILVDEYQDTNRVQEKILSCIKTGDEHNGNLFMVGDVKQSIYKFRQADPSLFIEKYQRFTIDGDGTGRRIDLSQNFRSRKEVLSTTNYIFKHMMDEQVGEVKYDEAAQLYYGAPYDESDHPVNLKVLVEADQEHSDLTGSEQEAHFIVEQVKDILEHQKVYDMKTGSYRSATYKDIVILERSFGQARNLQQAFKNEDIPFHVNSREGYFEQTEVRLVLSFLRAIDNPLQDIYLVGLMRSVIYQFKEDELAQIRILSPNDDYFYQSIVNYINDEAADAILVDKLKMFLSDIQSYQQYSKDHPVYQLIDKFYNDHYVIQYFSGLIGGRGRRANLYGLFNKAIEFENSSFRGLYQFIRFIDELIERGKDFGEENVVGPNDNVVRMMTIHSSKGLEFPFVIYSGLSKDFNKRDLKQPVILNQQFGLGMDYFDVDKEMAFPSLASVAYRAVAEKELVSEEIRLVYVALTRAKEQLYLIGRVKNDKSLLELEQLSISGEHIAVNERLTSPNPFHLIYSILSKHQSASIPDDLKFEKDIAQVEDSSRPNVNISIIYFEDVSTETILDNNEYRSVNQLETMQNGNEDVKAQIKHQLDYQYPYVNDTKKPSKQSVSELKRQYETEESGTSYERVRQYRIGFSTYERPKFLSEQGKRKANEIGTLMHTVMQHLPFKKERISEVELHQYIDGLIDKHIIEADAKKDIRMDEIMTFINSELYSIIAEAEQVYRELPFVVNQALVDQLPQGDEDVSIIQGMIDLIFVKDGVHYFVDYKTDAFNRRRGMTDEEIGTQLKNKYKIQMKYYQNTLQTILNKEVKGYLYFFKFGTLQL</sequence>
<feature type="chain" id="PRO_0000379315" description="ATP-dependent helicase/nuclease subunit A">
    <location>
        <begin position="1"/>
        <end position="1217"/>
    </location>
</feature>
<feature type="domain" description="UvrD-like helicase ATP-binding" evidence="1">
    <location>
        <begin position="10"/>
        <end position="475"/>
    </location>
</feature>
<feature type="domain" description="UvrD-like helicase C-terminal" evidence="1">
    <location>
        <begin position="476"/>
        <end position="786"/>
    </location>
</feature>
<feature type="binding site" evidence="1">
    <location>
        <begin position="31"/>
        <end position="38"/>
    </location>
    <ligand>
        <name>ATP</name>
        <dbReference type="ChEBI" id="CHEBI:30616"/>
    </ligand>
</feature>
<comment type="function">
    <text evidence="1">The heterodimer acts as both an ATP-dependent DNA helicase and an ATP-dependent, dual-direction single-stranded exonuclease. Recognizes the chi site generating a DNA molecule suitable for the initiation of homologous recombination. The AddA nuclease domain is required for chi fragment generation; this subunit has the helicase and 3' -&gt; 5' nuclease activities.</text>
</comment>
<comment type="catalytic activity">
    <reaction evidence="1">
        <text>Couples ATP hydrolysis with the unwinding of duplex DNA by translocating in the 3'-5' direction.</text>
        <dbReference type="EC" id="5.6.2.4"/>
    </reaction>
</comment>
<comment type="catalytic activity">
    <reaction evidence="1">
        <text>ATP + H2O = ADP + phosphate + H(+)</text>
        <dbReference type="Rhea" id="RHEA:13065"/>
        <dbReference type="ChEBI" id="CHEBI:15377"/>
        <dbReference type="ChEBI" id="CHEBI:15378"/>
        <dbReference type="ChEBI" id="CHEBI:30616"/>
        <dbReference type="ChEBI" id="CHEBI:43474"/>
        <dbReference type="ChEBI" id="CHEBI:456216"/>
        <dbReference type="EC" id="5.6.2.4"/>
    </reaction>
</comment>
<comment type="cofactor">
    <cofactor evidence="1">
        <name>Mg(2+)</name>
        <dbReference type="ChEBI" id="CHEBI:18420"/>
    </cofactor>
</comment>
<comment type="subunit">
    <text evidence="1">Heterodimer of AddA and AddB/RexB.</text>
</comment>
<comment type="similarity">
    <text evidence="1">Belongs to the helicase family. AddA subfamily.</text>
</comment>
<name>ADDA_STAAW</name>
<protein>
    <recommendedName>
        <fullName evidence="1">ATP-dependent helicase/nuclease subunit A</fullName>
        <ecNumber evidence="1">3.1.-.-</ecNumber>
        <ecNumber evidence="1">5.6.2.4</ecNumber>
    </recommendedName>
    <alternativeName>
        <fullName evidence="1">ATP-dependent helicase/nuclease AddA</fullName>
    </alternativeName>
    <alternativeName>
        <fullName evidence="1">DNA 3'-5' helicase AddA</fullName>
    </alternativeName>
</protein>
<gene>
    <name evidence="1" type="primary">addA</name>
    <name type="ordered locus">MW0849</name>
</gene>
<organism>
    <name type="scientific">Staphylococcus aureus (strain MW2)</name>
    <dbReference type="NCBI Taxonomy" id="196620"/>
    <lineage>
        <taxon>Bacteria</taxon>
        <taxon>Bacillati</taxon>
        <taxon>Bacillota</taxon>
        <taxon>Bacilli</taxon>
        <taxon>Bacillales</taxon>
        <taxon>Staphylococcaceae</taxon>
        <taxon>Staphylococcus</taxon>
    </lineage>
</organism>
<reference key="1">
    <citation type="journal article" date="2002" name="Lancet">
        <title>Genome and virulence determinants of high virulence community-acquired MRSA.</title>
        <authorList>
            <person name="Baba T."/>
            <person name="Takeuchi F."/>
            <person name="Kuroda M."/>
            <person name="Yuzawa H."/>
            <person name="Aoki K."/>
            <person name="Oguchi A."/>
            <person name="Nagai Y."/>
            <person name="Iwama N."/>
            <person name="Asano K."/>
            <person name="Naimi T."/>
            <person name="Kuroda H."/>
            <person name="Cui L."/>
            <person name="Yamamoto K."/>
            <person name="Hiramatsu K."/>
        </authorList>
    </citation>
    <scope>NUCLEOTIDE SEQUENCE [LARGE SCALE GENOMIC DNA]</scope>
    <source>
        <strain>MW2</strain>
    </source>
</reference>